<dbReference type="EMBL" id="CR380950">
    <property type="protein sequence ID" value="CAG58568.1"/>
    <property type="molecule type" value="Genomic_DNA"/>
</dbReference>
<dbReference type="RefSeq" id="XP_445657.1">
    <property type="nucleotide sequence ID" value="XM_445657.1"/>
</dbReference>
<dbReference type="SMR" id="Q6FVT7"/>
<dbReference type="FunCoup" id="Q6FVT7">
    <property type="interactions" value="96"/>
</dbReference>
<dbReference type="STRING" id="284593.Q6FVT7"/>
<dbReference type="EnsemblFungi" id="CAGL0D05698g-T">
    <property type="protein sequence ID" value="CAGL0D05698g-T-p1"/>
    <property type="gene ID" value="CAGL0D05698g"/>
</dbReference>
<dbReference type="KEGG" id="cgr:2886986"/>
<dbReference type="CGD" id="CAL0128273">
    <property type="gene designation" value="MMM1"/>
</dbReference>
<dbReference type="VEuPathDB" id="FungiDB:CAGL0D05698g"/>
<dbReference type="eggNOG" id="ENOG502QUUW">
    <property type="taxonomic scope" value="Eukaryota"/>
</dbReference>
<dbReference type="HOGENOM" id="CLU_032730_2_0_1"/>
<dbReference type="InParanoid" id="Q6FVT7"/>
<dbReference type="OMA" id="WSFTQGL"/>
<dbReference type="Proteomes" id="UP000002428">
    <property type="component" value="Chromosome D"/>
</dbReference>
<dbReference type="GO" id="GO:0005789">
    <property type="term" value="C:endoplasmic reticulum membrane"/>
    <property type="evidence" value="ECO:0007669"/>
    <property type="project" value="UniProtKB-SubCell"/>
</dbReference>
<dbReference type="GO" id="GO:0032865">
    <property type="term" value="C:ERMES complex"/>
    <property type="evidence" value="ECO:0007669"/>
    <property type="project" value="UniProtKB-UniRule"/>
</dbReference>
<dbReference type="GO" id="GO:0008289">
    <property type="term" value="F:lipid binding"/>
    <property type="evidence" value="ECO:0007669"/>
    <property type="project" value="UniProtKB-KW"/>
</dbReference>
<dbReference type="GO" id="GO:0120013">
    <property type="term" value="F:lipid transfer activity"/>
    <property type="evidence" value="ECO:0007669"/>
    <property type="project" value="EnsemblFungi"/>
</dbReference>
<dbReference type="GO" id="GO:0015917">
    <property type="term" value="P:aminophospholipid transport"/>
    <property type="evidence" value="ECO:0007669"/>
    <property type="project" value="EnsemblFungi"/>
</dbReference>
<dbReference type="GO" id="GO:0000002">
    <property type="term" value="P:mitochondrial genome maintenance"/>
    <property type="evidence" value="ECO:0007669"/>
    <property type="project" value="UniProtKB-UniRule"/>
</dbReference>
<dbReference type="GO" id="GO:0070096">
    <property type="term" value="P:mitochondrial outer membrane translocase complex assembly"/>
    <property type="evidence" value="ECO:0007669"/>
    <property type="project" value="EnsemblFungi"/>
</dbReference>
<dbReference type="GO" id="GO:1990456">
    <property type="term" value="P:mitochondrion-endoplasmic reticulum membrane tethering"/>
    <property type="evidence" value="ECO:0007669"/>
    <property type="project" value="EnsemblFungi"/>
</dbReference>
<dbReference type="GO" id="GO:0045040">
    <property type="term" value="P:protein insertion into mitochondrial outer membrane"/>
    <property type="evidence" value="ECO:0007669"/>
    <property type="project" value="UniProtKB-UniRule"/>
</dbReference>
<dbReference type="CDD" id="cd21671">
    <property type="entry name" value="SMP_Mmm1"/>
    <property type="match status" value="1"/>
</dbReference>
<dbReference type="HAMAP" id="MF_03103">
    <property type="entry name" value="Mmm1"/>
    <property type="match status" value="1"/>
</dbReference>
<dbReference type="InterPro" id="IPR027537">
    <property type="entry name" value="Mmm1"/>
</dbReference>
<dbReference type="InterPro" id="IPR019411">
    <property type="entry name" value="MMM1_dom"/>
</dbReference>
<dbReference type="InterPro" id="IPR031468">
    <property type="entry name" value="SMP_LBD"/>
</dbReference>
<dbReference type="PANTHER" id="PTHR13466:SF0">
    <property type="entry name" value="SMP-LTD DOMAIN-CONTAINING PROTEIN"/>
    <property type="match status" value="1"/>
</dbReference>
<dbReference type="PANTHER" id="PTHR13466">
    <property type="entry name" value="TEX2 PROTEIN-RELATED"/>
    <property type="match status" value="1"/>
</dbReference>
<dbReference type="Pfam" id="PF10296">
    <property type="entry name" value="MMM1"/>
    <property type="match status" value="1"/>
</dbReference>
<dbReference type="PROSITE" id="PS51847">
    <property type="entry name" value="SMP"/>
    <property type="match status" value="1"/>
</dbReference>
<comment type="function">
    <text evidence="1">Component of the ERMES/MDM complex, which serves as a molecular tether to connect the endoplasmic reticulum (ER) and mitochondria. Components of this complex are involved in the control of mitochondrial shape and protein biogenesis, and function in nonvesicular lipid trafficking between the ER and mitochondria. The MDM12-MMM1 subcomplex functions in the major beta-barrel assembly pathway that is responsible for biogenesis of all outer membrane beta-barrel proteins, and acts in a late step after the SAM complex. The MDM10-MDM12-MMM1 subcomplex further acts in the TOM40-specific pathway after the action of the MDM12-MMM1 complex. Essential for establishing and maintaining the structure of mitochondria and maintenance of mtDNA nucleoids.</text>
</comment>
<comment type="subunit">
    <text evidence="1">Homodimer. Component of the ER-mitochondria encounter structure (ERMES) or MDM complex, composed of MMM1, MDM10, MDM12 and MDM34. A MMM1 homodimer associates with one molecule of MDM12 on each side in a pairwise head-to-tail manner, and the SMP-LTD domains of MMM1 and MDM12 generate a continuous hydrophobic tunnel for phospholipid trafficking.</text>
</comment>
<comment type="subcellular location">
    <subcellularLocation>
        <location evidence="1">Endoplasmic reticulum membrane</location>
        <topology evidence="1">Single-pass type I membrane protein</topology>
    </subcellularLocation>
    <text evidence="1">The ERMES/MDM complex localizes to a few discrete foci (around 10 per single cell), that represent mitochondria-endoplasmic reticulum junctions. These foci are often found next to mtDNA nucleoids.</text>
</comment>
<comment type="domain">
    <text evidence="1">The SMP-LTD domain is a barrel-like domain that can bind various types of glycerophospholipids in its interior and mediate their transfer between two adjacent bilayers.</text>
</comment>
<comment type="similarity">
    <text evidence="1">Belongs to the MMM1 family.</text>
</comment>
<name>MMM1_CANGA</name>
<keyword id="KW-0256">Endoplasmic reticulum</keyword>
<keyword id="KW-0445">Lipid transport</keyword>
<keyword id="KW-0446">Lipid-binding</keyword>
<keyword id="KW-0472">Membrane</keyword>
<keyword id="KW-1185">Reference proteome</keyword>
<keyword id="KW-0812">Transmembrane</keyword>
<keyword id="KW-1133">Transmembrane helix</keyword>
<keyword id="KW-0813">Transport</keyword>
<proteinExistence type="inferred from homology"/>
<feature type="chain" id="PRO_0000384223" description="Maintenance of mitochondrial morphology protein 1">
    <location>
        <begin position="1"/>
        <end position="431"/>
    </location>
</feature>
<feature type="topological domain" description="Lumenal" evidence="1">
    <location>
        <begin position="1"/>
        <end position="103"/>
    </location>
</feature>
<feature type="transmembrane region" description="Helical" evidence="1">
    <location>
        <begin position="104"/>
        <end position="124"/>
    </location>
</feature>
<feature type="topological domain" description="Cytoplasmic" evidence="1">
    <location>
        <begin position="125"/>
        <end position="431"/>
    </location>
</feature>
<feature type="domain" description="SMP-LTD" evidence="1">
    <location>
        <begin position="192"/>
        <end position="404"/>
    </location>
</feature>
<feature type="region of interest" description="Disordered" evidence="2">
    <location>
        <begin position="412"/>
        <end position="431"/>
    </location>
</feature>
<protein>
    <recommendedName>
        <fullName evidence="1">Maintenance of mitochondrial morphology protein 1</fullName>
    </recommendedName>
</protein>
<reference key="1">
    <citation type="journal article" date="2004" name="Nature">
        <title>Genome evolution in yeasts.</title>
        <authorList>
            <person name="Dujon B."/>
            <person name="Sherman D."/>
            <person name="Fischer G."/>
            <person name="Durrens P."/>
            <person name="Casaregola S."/>
            <person name="Lafontaine I."/>
            <person name="de Montigny J."/>
            <person name="Marck C."/>
            <person name="Neuveglise C."/>
            <person name="Talla E."/>
            <person name="Goffard N."/>
            <person name="Frangeul L."/>
            <person name="Aigle M."/>
            <person name="Anthouard V."/>
            <person name="Babour A."/>
            <person name="Barbe V."/>
            <person name="Barnay S."/>
            <person name="Blanchin S."/>
            <person name="Beckerich J.-M."/>
            <person name="Beyne E."/>
            <person name="Bleykasten C."/>
            <person name="Boisrame A."/>
            <person name="Boyer J."/>
            <person name="Cattolico L."/>
            <person name="Confanioleri F."/>
            <person name="de Daruvar A."/>
            <person name="Despons L."/>
            <person name="Fabre E."/>
            <person name="Fairhead C."/>
            <person name="Ferry-Dumazet H."/>
            <person name="Groppi A."/>
            <person name="Hantraye F."/>
            <person name="Hennequin C."/>
            <person name="Jauniaux N."/>
            <person name="Joyet P."/>
            <person name="Kachouri R."/>
            <person name="Kerrest A."/>
            <person name="Koszul R."/>
            <person name="Lemaire M."/>
            <person name="Lesur I."/>
            <person name="Ma L."/>
            <person name="Muller H."/>
            <person name="Nicaud J.-M."/>
            <person name="Nikolski M."/>
            <person name="Oztas S."/>
            <person name="Ozier-Kalogeropoulos O."/>
            <person name="Pellenz S."/>
            <person name="Potier S."/>
            <person name="Richard G.-F."/>
            <person name="Straub M.-L."/>
            <person name="Suleau A."/>
            <person name="Swennen D."/>
            <person name="Tekaia F."/>
            <person name="Wesolowski-Louvel M."/>
            <person name="Westhof E."/>
            <person name="Wirth B."/>
            <person name="Zeniou-Meyer M."/>
            <person name="Zivanovic Y."/>
            <person name="Bolotin-Fukuhara M."/>
            <person name="Thierry A."/>
            <person name="Bouchier C."/>
            <person name="Caudron B."/>
            <person name="Scarpelli C."/>
            <person name="Gaillardin C."/>
            <person name="Weissenbach J."/>
            <person name="Wincker P."/>
            <person name="Souciet J.-L."/>
        </authorList>
    </citation>
    <scope>NUCLEOTIDE SEQUENCE [LARGE SCALE GENOMIC DNA]</scope>
    <source>
        <strain>ATCC 2001 / BCRC 20586 / JCM 3761 / NBRC 0622 / NRRL Y-65 / CBS 138</strain>
    </source>
</reference>
<evidence type="ECO:0000255" key="1">
    <source>
        <dbReference type="HAMAP-Rule" id="MF_03103"/>
    </source>
</evidence>
<evidence type="ECO:0000256" key="2">
    <source>
        <dbReference type="SAM" id="MobiDB-lite"/>
    </source>
</evidence>
<sequence>MVSALEVKSIKDSNETLISLDDYIRNTLPSQLHEILLEEFQNQDFSRGQDVSNSTHDQMIDHTLELTSDLLRNALDKQLMEVQSRTLPVRQSNQLISWSFAQGLIIGQLSVVIFLIFFVKFFIFTDASSKMDNPLPSKVSKSYLKNRRESSSIKDKRKGVLVKEESGETDLHGSLQLNDILEKTYYNVDTHSAESLDWFNVLLAQMIQQFREEAWHKDNILTSLDSFIQKRSSDLPDYLDKITITELDIGEDFPIFSNCRIQYAPNSSDKKLEAKIDIDLNDKITFGMSTRLLLNYPKKCTAALPIDLAVSMVRFQACLTVSLITAEELEFTTGNKIDDNEKNGYYLVFSFTPEYKIDFDIKSLIGARSKLENIPKISNIIEYNIKKWFAERCVEPRFQSVKLPGMWPRSKNTREEVIHKTEDESSKTPHS</sequence>
<organism>
    <name type="scientific">Candida glabrata (strain ATCC 2001 / BCRC 20586 / JCM 3761 / NBRC 0622 / NRRL Y-65 / CBS 138)</name>
    <name type="common">Yeast</name>
    <name type="synonym">Nakaseomyces glabratus</name>
    <dbReference type="NCBI Taxonomy" id="284593"/>
    <lineage>
        <taxon>Eukaryota</taxon>
        <taxon>Fungi</taxon>
        <taxon>Dikarya</taxon>
        <taxon>Ascomycota</taxon>
        <taxon>Saccharomycotina</taxon>
        <taxon>Saccharomycetes</taxon>
        <taxon>Saccharomycetales</taxon>
        <taxon>Saccharomycetaceae</taxon>
        <taxon>Nakaseomyces</taxon>
    </lineage>
</organism>
<accession>Q6FVT7</accession>
<gene>
    <name evidence="1" type="primary">MMM1</name>
    <name type="ordered locus">CAGL0D05698g</name>
</gene>